<organism>
    <name type="scientific">Saccharum officinarum</name>
    <name type="common">Sugarcane</name>
    <dbReference type="NCBI Taxonomy" id="4547"/>
    <lineage>
        <taxon>Eukaryota</taxon>
        <taxon>Viridiplantae</taxon>
        <taxon>Streptophyta</taxon>
        <taxon>Embryophyta</taxon>
        <taxon>Tracheophyta</taxon>
        <taxon>Spermatophyta</taxon>
        <taxon>Magnoliopsida</taxon>
        <taxon>Liliopsida</taxon>
        <taxon>Poales</taxon>
        <taxon>Poaceae</taxon>
        <taxon>PACMAD clade</taxon>
        <taxon>Panicoideae</taxon>
        <taxon>Andropogonodae</taxon>
        <taxon>Andropogoneae</taxon>
        <taxon>Saccharinae</taxon>
        <taxon>Saccharum</taxon>
        <taxon>Saccharum officinarum species complex</taxon>
    </lineage>
</organism>
<proteinExistence type="inferred from homology"/>
<evidence type="ECO:0000255" key="1">
    <source>
        <dbReference type="HAMAP-Rule" id="MF_00642"/>
    </source>
</evidence>
<geneLocation type="chloroplast"/>
<keyword id="KW-0150">Chloroplast</keyword>
<keyword id="KW-0249">Electron transport</keyword>
<keyword id="KW-0349">Heme</keyword>
<keyword id="KW-0408">Iron</keyword>
<keyword id="KW-0472">Membrane</keyword>
<keyword id="KW-0479">Metal-binding</keyword>
<keyword id="KW-0602">Photosynthesis</keyword>
<keyword id="KW-0604">Photosystem II</keyword>
<keyword id="KW-0934">Plastid</keyword>
<keyword id="KW-0793">Thylakoid</keyword>
<keyword id="KW-0812">Transmembrane</keyword>
<keyword id="KW-1133">Transmembrane helix</keyword>
<keyword id="KW-0813">Transport</keyword>
<protein>
    <recommendedName>
        <fullName evidence="1">Cytochrome b559 subunit alpha</fullName>
    </recommendedName>
    <alternativeName>
        <fullName evidence="1">PSII reaction center subunit V</fullName>
    </alternativeName>
</protein>
<reference key="1">
    <citation type="journal article" date="2004" name="DNA Res.">
        <title>Complete nucleotide sequence of the sugarcane (Saccharum officinarum) chloroplast genome: a comparative analysis of four monocot chloroplast genomes.</title>
        <authorList>
            <person name="Asano T."/>
            <person name="Tsudzuki T."/>
            <person name="Takahashi S."/>
            <person name="Shimada H."/>
            <person name="Kadowaki K."/>
        </authorList>
    </citation>
    <scope>NUCLEOTIDE SEQUENCE [LARGE SCALE GENOMIC DNA]</scope>
</reference>
<dbReference type="EMBL" id="AP006714">
    <property type="protein sequence ID" value="BAD27309.1"/>
    <property type="molecule type" value="Genomic_DNA"/>
</dbReference>
<dbReference type="RefSeq" id="YP_009389587.1">
    <property type="nucleotide sequence ID" value="NC_035224.1"/>
</dbReference>
<dbReference type="SMR" id="Q6ENU7"/>
<dbReference type="GeneID" id="33347814"/>
<dbReference type="GO" id="GO:0009535">
    <property type="term" value="C:chloroplast thylakoid membrane"/>
    <property type="evidence" value="ECO:0007669"/>
    <property type="project" value="UniProtKB-SubCell"/>
</dbReference>
<dbReference type="GO" id="GO:0009539">
    <property type="term" value="C:photosystem II reaction center"/>
    <property type="evidence" value="ECO:0007669"/>
    <property type="project" value="InterPro"/>
</dbReference>
<dbReference type="GO" id="GO:0009055">
    <property type="term" value="F:electron transfer activity"/>
    <property type="evidence" value="ECO:0007669"/>
    <property type="project" value="UniProtKB-UniRule"/>
</dbReference>
<dbReference type="GO" id="GO:0020037">
    <property type="term" value="F:heme binding"/>
    <property type="evidence" value="ECO:0007669"/>
    <property type="project" value="InterPro"/>
</dbReference>
<dbReference type="GO" id="GO:0005506">
    <property type="term" value="F:iron ion binding"/>
    <property type="evidence" value="ECO:0007669"/>
    <property type="project" value="UniProtKB-UniRule"/>
</dbReference>
<dbReference type="GO" id="GO:0009767">
    <property type="term" value="P:photosynthetic electron transport chain"/>
    <property type="evidence" value="ECO:0007669"/>
    <property type="project" value="InterPro"/>
</dbReference>
<dbReference type="Gene3D" id="1.20.5.860">
    <property type="entry name" value="Photosystem II cytochrome b559, alpha subunit"/>
    <property type="match status" value="1"/>
</dbReference>
<dbReference type="HAMAP" id="MF_00642">
    <property type="entry name" value="PSII_PsbE"/>
    <property type="match status" value="1"/>
</dbReference>
<dbReference type="InterPro" id="IPR006217">
    <property type="entry name" value="PSII_cyt_b559_asu"/>
</dbReference>
<dbReference type="InterPro" id="IPR037025">
    <property type="entry name" value="PSII_cyt_b559_asu_sf"/>
</dbReference>
<dbReference type="InterPro" id="IPR006216">
    <property type="entry name" value="PSII_cyt_b559_CS"/>
</dbReference>
<dbReference type="InterPro" id="IPR013081">
    <property type="entry name" value="PSII_cyt_b559_N"/>
</dbReference>
<dbReference type="InterPro" id="IPR013082">
    <property type="entry name" value="PSII_cytb559_asu_lum"/>
</dbReference>
<dbReference type="NCBIfam" id="TIGR01332">
    <property type="entry name" value="cyt_b559_alpha"/>
    <property type="match status" value="1"/>
</dbReference>
<dbReference type="PANTHER" id="PTHR33391:SF13">
    <property type="entry name" value="CYTOCHROME B559 SUBUNIT ALPHA"/>
    <property type="match status" value="1"/>
</dbReference>
<dbReference type="PANTHER" id="PTHR33391">
    <property type="entry name" value="CYTOCHROME B559 SUBUNIT BETA-RELATED"/>
    <property type="match status" value="1"/>
</dbReference>
<dbReference type="Pfam" id="PF00283">
    <property type="entry name" value="Cytochrom_B559"/>
    <property type="match status" value="1"/>
</dbReference>
<dbReference type="Pfam" id="PF00284">
    <property type="entry name" value="Cytochrom_B559a"/>
    <property type="match status" value="1"/>
</dbReference>
<dbReference type="PIRSF" id="PIRSF000036">
    <property type="entry name" value="PsbE"/>
    <property type="match status" value="1"/>
</dbReference>
<dbReference type="SUPFAM" id="SSF161045">
    <property type="entry name" value="Cytochrome b559 subunits"/>
    <property type="match status" value="1"/>
</dbReference>
<dbReference type="PROSITE" id="PS00537">
    <property type="entry name" value="CYTOCHROME_B559"/>
    <property type="match status" value="1"/>
</dbReference>
<comment type="function">
    <text evidence="1">This b-type cytochrome is tightly associated with the reaction center of photosystem II (PSII). PSII is a light-driven water:plastoquinone oxidoreductase that uses light energy to abstract electrons from H(2)O, generating O(2) and a proton gradient subsequently used for ATP formation. It consists of a core antenna complex that captures photons, and an electron transfer chain that converts photonic excitation into a charge separation.</text>
</comment>
<comment type="cofactor">
    <cofactor evidence="1">
        <name>heme b</name>
        <dbReference type="ChEBI" id="CHEBI:60344"/>
    </cofactor>
    <text evidence="1">With its partner (PsbF) binds heme. PSII binds additional chlorophylls, carotenoids and specific lipids.</text>
</comment>
<comment type="subunit">
    <text evidence="1">Heterodimer of an alpha subunit and a beta subunit. PSII is composed of 1 copy each of membrane proteins PsbA, PsbB, PsbC, PsbD, PsbE, PsbF, PsbH, PsbI, PsbJ, PsbK, PsbL, PsbM, PsbT, PsbX, PsbY, PsbZ, Psb30/Ycf12, at least 3 peripheral proteins of the oxygen-evolving complex and a large number of cofactors. It forms dimeric complexes.</text>
</comment>
<comment type="subcellular location">
    <subcellularLocation>
        <location evidence="1">Plastid</location>
        <location evidence="1">Chloroplast thylakoid membrane</location>
        <topology evidence="1">Single-pass membrane protein</topology>
    </subcellularLocation>
</comment>
<comment type="similarity">
    <text evidence="1">Belongs to the PsbE/PsbF family.</text>
</comment>
<gene>
    <name evidence="1" type="primary">psbE</name>
</gene>
<accession>Q6ENU7</accession>
<feature type="chain" id="PRO_0000200337" description="Cytochrome b559 subunit alpha">
    <location>
        <begin position="1"/>
        <end position="83"/>
    </location>
</feature>
<feature type="transmembrane region" description="Helical" evidence="1">
    <location>
        <begin position="21"/>
        <end position="35"/>
    </location>
</feature>
<feature type="binding site" description="axial binding residue" evidence="1">
    <location>
        <position position="23"/>
    </location>
    <ligand>
        <name>heme</name>
        <dbReference type="ChEBI" id="CHEBI:30413"/>
        <note>ligand shared with beta subunit</note>
    </ligand>
    <ligandPart>
        <name>Fe</name>
        <dbReference type="ChEBI" id="CHEBI:18248"/>
    </ligandPart>
</feature>
<name>PSBE_SACOF</name>
<sequence length="83" mass="9445">MSGSTGERSFADIITSIRYWVIHSITIPSLFIAGWLFVSTGLAYDVFGSPRPNEYFTESRQGIPLITDRFDSLEQLDEFSRSF</sequence>